<comment type="similarity">
    <text evidence="5">Belongs to the Bowman-Birk serine protease inhibitor family.</text>
</comment>
<comment type="sequence caution" evidence="5">
    <conflict type="erroneous initiation">
        <sequence resource="EMBL-CDS" id="AAB68026"/>
    </conflict>
</comment>
<comment type="sequence caution" evidence="5">
    <conflict type="miscellaneous discrepancy">
        <sequence resource="EMBL-CDS" id="AAD10378"/>
    </conflict>
    <text>Chimeric cDNA. Its N-terminal part is derived from the gene LOC_Os01g03390, which coded for an RBBI2.3 protein.</text>
</comment>
<comment type="sequence caution" evidence="5">
    <conflict type="erroneous gene model prediction">
        <sequence resource="EMBL-CDS" id="BAD52869"/>
    </conflict>
</comment>
<protein>
    <recommendedName>
        <fullName>Bowman-Birk type bran trypsin inhibitor</fullName>
    </recommendedName>
    <alternativeName>
        <fullName>OSE727A</fullName>
    </alternativeName>
    <alternativeName>
        <fullName>Protein RBBI3-3</fullName>
    </alternativeName>
    <alternativeName>
        <fullName>RBTI</fullName>
    </alternativeName>
</protein>
<dbReference type="EMBL" id="AB098712">
    <property type="protein sequence ID" value="BAC78439.1"/>
    <property type="molecule type" value="mRNA"/>
</dbReference>
<dbReference type="EMBL" id="AP002909">
    <property type="protein sequence ID" value="BAB21173.1"/>
    <property type="molecule type" value="Genomic_DNA"/>
</dbReference>
<dbReference type="EMBL" id="AP003233">
    <property type="protein sequence ID" value="BAD52869.1"/>
    <property type="status" value="ALT_SEQ"/>
    <property type="molecule type" value="Genomic_DNA"/>
</dbReference>
<dbReference type="EMBL" id="AP008207">
    <property type="protein sequence ID" value="BAH90883.1"/>
    <property type="molecule type" value="Genomic_DNA"/>
</dbReference>
<dbReference type="EMBL" id="AP014957">
    <property type="protein sequence ID" value="BAS70158.1"/>
    <property type="molecule type" value="Genomic_DNA"/>
</dbReference>
<dbReference type="EMBL" id="U57640">
    <property type="protein sequence ID" value="AAD10378.1"/>
    <property type="status" value="ALT_SEQ"/>
    <property type="molecule type" value="mRNA"/>
</dbReference>
<dbReference type="EMBL" id="U76004">
    <property type="protein sequence ID" value="AAB68026.1"/>
    <property type="status" value="ALT_INIT"/>
    <property type="molecule type" value="mRNA"/>
</dbReference>
<dbReference type="PIR" id="A27193">
    <property type="entry name" value="TIRZBR"/>
</dbReference>
<dbReference type="PIR" id="T04161">
    <property type="entry name" value="T04161"/>
</dbReference>
<dbReference type="RefSeq" id="XP_015622026.1">
    <property type="nucleotide sequence ID" value="XM_015766540.1"/>
</dbReference>
<dbReference type="PDB" id="2QN5">
    <property type="method" value="X-ray"/>
    <property type="resolution" value="3.00 A"/>
    <property type="chains" value="B=119-251"/>
</dbReference>
<dbReference type="PDBsum" id="2QN5"/>
<dbReference type="SMR" id="Q0JR25"/>
<dbReference type="FunCoup" id="Q0JR25">
    <property type="interactions" value="24"/>
</dbReference>
<dbReference type="STRING" id="39947.Q0JR25"/>
<dbReference type="MEROPS" id="I12.007"/>
<dbReference type="PaxDb" id="39947-Q0JR25"/>
<dbReference type="EnsemblPlants" id="Os01t0124401-01">
    <property type="protein sequence ID" value="Os01t0124401-01"/>
    <property type="gene ID" value="Os01g0124401"/>
</dbReference>
<dbReference type="Gramene" id="Os01t0124401-01">
    <property type="protein sequence ID" value="Os01t0124401-01"/>
    <property type="gene ID" value="Os01g0124401"/>
</dbReference>
<dbReference type="KEGG" id="dosa:Os01g0124400"/>
<dbReference type="eggNOG" id="ENOG502R48J">
    <property type="taxonomic scope" value="Eukaryota"/>
</dbReference>
<dbReference type="HOGENOM" id="CLU_059102_0_0_1"/>
<dbReference type="InParanoid" id="Q0JR25"/>
<dbReference type="OMA" id="HPGPVCK"/>
<dbReference type="OrthoDB" id="757405at2759"/>
<dbReference type="EvolutionaryTrace" id="Q0JR25"/>
<dbReference type="Proteomes" id="UP000000763">
    <property type="component" value="Chromosome 1"/>
</dbReference>
<dbReference type="Proteomes" id="UP000059680">
    <property type="component" value="Chromosome 1"/>
</dbReference>
<dbReference type="GO" id="GO:0005576">
    <property type="term" value="C:extracellular region"/>
    <property type="evidence" value="ECO:0007669"/>
    <property type="project" value="InterPro"/>
</dbReference>
<dbReference type="GO" id="GO:0004867">
    <property type="term" value="F:serine-type endopeptidase inhibitor activity"/>
    <property type="evidence" value="ECO:0007669"/>
    <property type="project" value="UniProtKB-KW"/>
</dbReference>
<dbReference type="CDD" id="cd00023">
    <property type="entry name" value="BBI"/>
    <property type="match status" value="3"/>
</dbReference>
<dbReference type="Gene3D" id="2.10.69.10">
    <property type="entry name" value="Cysteine Protease (Bromelain) Inhibitor, subunit H"/>
    <property type="match status" value="3"/>
</dbReference>
<dbReference type="InterPro" id="IPR035995">
    <property type="entry name" value="Bowman-Birk_prot_inh"/>
</dbReference>
<dbReference type="InterPro" id="IPR000877">
    <property type="entry name" value="Prot_inh_BBI"/>
</dbReference>
<dbReference type="PANTHER" id="PTHR33479">
    <property type="entry name" value="BOWMAN-BIRK TYPE BRAN TRYPSIN INHIBITOR"/>
    <property type="match status" value="1"/>
</dbReference>
<dbReference type="PANTHER" id="PTHR33479:SF22">
    <property type="entry name" value="BOWMAN-BIRK TYPE BRAN TRYPSIN INHIBITOR"/>
    <property type="match status" value="1"/>
</dbReference>
<dbReference type="Pfam" id="PF00228">
    <property type="entry name" value="Bowman-Birk_leg"/>
    <property type="match status" value="3"/>
</dbReference>
<dbReference type="SMART" id="SM00269">
    <property type="entry name" value="BowB"/>
    <property type="match status" value="3"/>
</dbReference>
<dbReference type="SUPFAM" id="SSF57247">
    <property type="entry name" value="Bowman-Birk inhibitor, BBI"/>
    <property type="match status" value="3"/>
</dbReference>
<dbReference type="PROSITE" id="PS00281">
    <property type="entry name" value="BOWMAN_BIRK"/>
    <property type="match status" value="2"/>
</dbReference>
<gene>
    <name type="primary">RBBI3.3</name>
    <name type="ordered locus">Os01g0124401</name>
    <name type="ordered locus">Os01g0124400</name>
    <name type="ordered locus">LOC_Os01g03360</name>
    <name type="ORF">P0037C04.19</name>
    <name type="ORF">P0044F08.1</name>
</gene>
<evidence type="ECO:0000250" key="1"/>
<evidence type="ECO:0000255" key="2"/>
<evidence type="ECO:0000269" key="3">
    <source>
    </source>
</evidence>
<evidence type="ECO:0000269" key="4">
    <source>
    </source>
</evidence>
<evidence type="ECO:0000305" key="5"/>
<evidence type="ECO:0007829" key="6">
    <source>
        <dbReference type="PDB" id="2QN5"/>
    </source>
</evidence>
<name>IBBR_ORYSJ</name>
<proteinExistence type="evidence at protein level"/>
<organism>
    <name type="scientific">Oryza sativa subsp. japonica</name>
    <name type="common">Rice</name>
    <dbReference type="NCBI Taxonomy" id="39947"/>
    <lineage>
        <taxon>Eukaryota</taxon>
        <taxon>Viridiplantae</taxon>
        <taxon>Streptophyta</taxon>
        <taxon>Embryophyta</taxon>
        <taxon>Tracheophyta</taxon>
        <taxon>Spermatophyta</taxon>
        <taxon>Magnoliopsida</taxon>
        <taxon>Liliopsida</taxon>
        <taxon>Poales</taxon>
        <taxon>Poaceae</taxon>
        <taxon>BOP clade</taxon>
        <taxon>Oryzoideae</taxon>
        <taxon>Oryzeae</taxon>
        <taxon>Oryzinae</taxon>
        <taxon>Oryza</taxon>
        <taxon>Oryza sativa</taxon>
    </lineage>
</organism>
<sequence>MSNTTMATSTILLFLLAGLAAAHGDGDTTIRLPSDGAKASRPRAAKPWDCCDNIEISRLMIYPPLYRCNDEVKQCAAACKECVEAPGGDFNGGAFVCSDWFSTVDPGPKCTAALDGLSMERPWKCCDNIKRLPTKPDPPQWRCNDELEPSQCTAACKSCREAPGPFPGKLICEDIYWGADPGPFCTPRPWGDCCDKAFCNKMNPPTCRCMDEVKECADACKDCQRVESSEPPRYVCKDRFTGHPGPVCKPRAEN</sequence>
<reference key="1">
    <citation type="submission" date="2002-12" db="EMBL/GenBank/DDBJ databases">
        <title>Cloning, expression and localization pattern of a trypsin inhibitor gene from rice.</title>
        <authorList>
            <person name="Masumura T."/>
            <person name="Fujioka M."/>
            <person name="Matsui Y."/>
            <person name="Kumazawa Y."/>
            <person name="Tashiro M."/>
            <person name="Morita S."/>
            <person name="Tanaka K."/>
        </authorList>
    </citation>
    <scope>NUCLEOTIDE SEQUENCE [MRNA]</scope>
    <source>
        <strain>cv. Nipponbare</strain>
        <tissue>Embryo</tissue>
    </source>
</reference>
<reference key="2">
    <citation type="journal article" date="2002" name="Nature">
        <title>The genome sequence and structure of rice chromosome 1.</title>
        <authorList>
            <person name="Sasaki T."/>
            <person name="Matsumoto T."/>
            <person name="Yamamoto K."/>
            <person name="Sakata K."/>
            <person name="Baba T."/>
            <person name="Katayose Y."/>
            <person name="Wu J."/>
            <person name="Niimura Y."/>
            <person name="Cheng Z."/>
            <person name="Nagamura Y."/>
            <person name="Antonio B.A."/>
            <person name="Kanamori H."/>
            <person name="Hosokawa S."/>
            <person name="Masukawa M."/>
            <person name="Arikawa K."/>
            <person name="Chiden Y."/>
            <person name="Hayashi M."/>
            <person name="Okamoto M."/>
            <person name="Ando T."/>
            <person name="Aoki H."/>
            <person name="Arita K."/>
            <person name="Hamada M."/>
            <person name="Harada C."/>
            <person name="Hijishita S."/>
            <person name="Honda M."/>
            <person name="Ichikawa Y."/>
            <person name="Idonuma A."/>
            <person name="Iijima M."/>
            <person name="Ikeda M."/>
            <person name="Ikeno M."/>
            <person name="Ito S."/>
            <person name="Ito T."/>
            <person name="Ito Y."/>
            <person name="Ito Y."/>
            <person name="Iwabuchi A."/>
            <person name="Kamiya K."/>
            <person name="Karasawa W."/>
            <person name="Katagiri S."/>
            <person name="Kikuta A."/>
            <person name="Kobayashi N."/>
            <person name="Kono I."/>
            <person name="Machita K."/>
            <person name="Maehara T."/>
            <person name="Mizuno H."/>
            <person name="Mizubayashi T."/>
            <person name="Mukai Y."/>
            <person name="Nagasaki H."/>
            <person name="Nakashima M."/>
            <person name="Nakama Y."/>
            <person name="Nakamichi Y."/>
            <person name="Nakamura M."/>
            <person name="Namiki N."/>
            <person name="Negishi M."/>
            <person name="Ohta I."/>
            <person name="Ono N."/>
            <person name="Saji S."/>
            <person name="Sakai K."/>
            <person name="Shibata M."/>
            <person name="Shimokawa T."/>
            <person name="Shomura A."/>
            <person name="Song J."/>
            <person name="Takazaki Y."/>
            <person name="Terasawa K."/>
            <person name="Tsuji K."/>
            <person name="Waki K."/>
            <person name="Yamagata H."/>
            <person name="Yamane H."/>
            <person name="Yoshiki S."/>
            <person name="Yoshihara R."/>
            <person name="Yukawa K."/>
            <person name="Zhong H."/>
            <person name="Iwama H."/>
            <person name="Endo T."/>
            <person name="Ito H."/>
            <person name="Hahn J.H."/>
            <person name="Kim H.-I."/>
            <person name="Eun M.-Y."/>
            <person name="Yano M."/>
            <person name="Jiang J."/>
            <person name="Gojobori T."/>
        </authorList>
    </citation>
    <scope>NUCLEOTIDE SEQUENCE [LARGE SCALE GENOMIC DNA]</scope>
    <source>
        <strain>cv. Nipponbare</strain>
    </source>
</reference>
<reference key="3">
    <citation type="journal article" date="2005" name="Nature">
        <title>The map-based sequence of the rice genome.</title>
        <authorList>
            <consortium name="International rice genome sequencing project (IRGSP)"/>
        </authorList>
    </citation>
    <scope>NUCLEOTIDE SEQUENCE [LARGE SCALE GENOMIC DNA]</scope>
    <source>
        <strain>cv. Nipponbare</strain>
    </source>
</reference>
<reference key="4">
    <citation type="journal article" date="2008" name="Nucleic Acids Res.">
        <title>The rice annotation project database (RAP-DB): 2008 update.</title>
        <authorList>
            <consortium name="The rice annotation project (RAP)"/>
        </authorList>
    </citation>
    <scope>GENOME REANNOTATION</scope>
    <source>
        <strain>cv. Nipponbare</strain>
    </source>
</reference>
<reference key="5">
    <citation type="journal article" date="2013" name="Rice">
        <title>Improvement of the Oryza sativa Nipponbare reference genome using next generation sequence and optical map data.</title>
        <authorList>
            <person name="Kawahara Y."/>
            <person name="de la Bastide M."/>
            <person name="Hamilton J.P."/>
            <person name="Kanamori H."/>
            <person name="McCombie W.R."/>
            <person name="Ouyang S."/>
            <person name="Schwartz D.C."/>
            <person name="Tanaka T."/>
            <person name="Wu J."/>
            <person name="Zhou S."/>
            <person name="Childs K.L."/>
            <person name="Davidson R.M."/>
            <person name="Lin H."/>
            <person name="Quesada-Ocampo L."/>
            <person name="Vaillancourt B."/>
            <person name="Sakai H."/>
            <person name="Lee S.S."/>
            <person name="Kim J."/>
            <person name="Numa H."/>
            <person name="Itoh T."/>
            <person name="Buell C.R."/>
            <person name="Matsumoto T."/>
        </authorList>
    </citation>
    <scope>GENOME REANNOTATION</scope>
    <source>
        <strain>cv. Nipponbare</strain>
    </source>
</reference>
<reference key="6">
    <citation type="online journal article" date="1997" name="Plant Gene Register">
        <title>Nucleotide sequence of a cDNA encoding rice Bowman-Birk proteinase inhibitor.</title>
        <authorList>
            <person name="Chen P.-W."/>
            <person name="Chow S.-H."/>
            <person name="Chen L.-J."/>
        </authorList>
        <locator>PGR97-015</locator>
    </citation>
    <scope>NUCLEOTIDE SEQUENCE [MRNA] OF 7-254</scope>
    <source>
        <strain>cv. Lomello</strain>
        <tissue>Embryo</tissue>
    </source>
</reference>
<reference key="7">
    <citation type="journal article" date="1987" name="J. Biochem.">
        <title>The complete amino acid sequence of rice bran trypsin inhibitor.</title>
        <authorList>
            <person name="Tashiro M."/>
            <person name="Hashino K."/>
            <person name="Shiozaki M."/>
            <person name="Ibuki F."/>
            <person name="Maki Z."/>
        </authorList>
    </citation>
    <scope>PROTEIN SEQUENCE OF 119-251</scope>
    <source>
        <strain>cv. Nipponbare</strain>
    </source>
</reference>
<reference key="8">
    <citation type="journal article" date="2006" name="Acta Crystallogr. F">
        <title>Purification, crystallization and preliminary X-ray crystallographic analysis of rice Bowman-Birk inhibitor from Oryza sativa.</title>
        <authorList>
            <person name="Lin Y.H."/>
            <person name="Li H.T."/>
            <person name="Huang Y.C."/>
            <person name="Hsieh Y.C."/>
            <person name="Guan H.H."/>
            <person name="Liu M.Y."/>
            <person name="Chang T."/>
            <person name="Wang A.H."/>
            <person name="Chen C.J."/>
        </authorList>
    </citation>
    <scope>X-RAY CRYSTALLOGRAPHY (3.0 ANGSTROMS) OF 119-251</scope>
    <scope>DISULFIDE BONDS</scope>
</reference>
<feature type="signal peptide" evidence="2">
    <location>
        <begin position="1"/>
        <end position="22"/>
    </location>
</feature>
<feature type="propeptide" id="PRO_0000003286" evidence="4">
    <location>
        <begin position="23"/>
        <end position="118"/>
    </location>
</feature>
<feature type="chain" id="PRO_0000003287" description="Bowman-Birk type bran trypsin inhibitor">
    <location>
        <begin position="119"/>
        <end position="251"/>
    </location>
</feature>
<feature type="propeptide" id="PRO_0000003288">
    <location>
        <begin position="252"/>
        <end position="254"/>
    </location>
</feature>
<feature type="repeat">
    <location>
        <begin position="46"/>
        <end position="120"/>
    </location>
</feature>
<feature type="repeat">
    <location>
        <begin position="121"/>
        <end position="187"/>
    </location>
</feature>
<feature type="repeat">
    <location>
        <begin position="188"/>
        <end position="251"/>
    </location>
</feature>
<feature type="site" description="Reactive bond for trypsin" evidence="1">
    <location>
        <begin position="135"/>
        <end position="136"/>
    </location>
</feature>
<feature type="site" description="Reactive bond for trypsin" evidence="1">
    <location>
        <begin position="201"/>
        <end position="202"/>
    </location>
</feature>
<feature type="disulfide bond" evidence="3">
    <location>
        <begin position="125"/>
        <end position="185"/>
    </location>
</feature>
<feature type="disulfide bond" evidence="3">
    <location>
        <begin position="126"/>
        <end position="143"/>
    </location>
</feature>
<feature type="disulfide bond" evidence="3">
    <location>
        <begin position="152"/>
        <end position="159"/>
    </location>
</feature>
<feature type="disulfide bond" evidence="3">
    <location>
        <begin position="156"/>
        <end position="172"/>
    </location>
</feature>
<feature type="disulfide bond" evidence="3">
    <location>
        <begin position="193"/>
        <end position="248"/>
    </location>
</feature>
<feature type="disulfide bond" evidence="3">
    <location>
        <begin position="194"/>
        <end position="209"/>
    </location>
</feature>
<feature type="disulfide bond" evidence="3">
    <location>
        <begin position="199"/>
        <end position="207"/>
    </location>
</feature>
<feature type="disulfide bond" evidence="3">
    <location>
        <begin position="216"/>
        <end position="223"/>
    </location>
</feature>
<feature type="disulfide bond" evidence="3">
    <location>
        <begin position="220"/>
        <end position="236"/>
    </location>
</feature>
<feature type="sequence conflict" description="In Ref. 6; AAB68026/AAD10378." evidence="5" ref="6">
    <original>R</original>
    <variation>K</variation>
    <location>
        <position position="121"/>
    </location>
</feature>
<feature type="sequence conflict" description="In Ref. 6; AAB68026/AAD10378." evidence="5" ref="6">
    <original>K</original>
    <variation>E</variation>
    <location>
        <position position="130"/>
    </location>
</feature>
<feature type="sequence conflict" description="In Ref. 6; AAB68026/AAD10378." evidence="5" ref="6">
    <original>PD</original>
    <variation>TN</variation>
    <location>
        <begin position="136"/>
        <end position="137"/>
    </location>
</feature>
<feature type="sequence conflict" description="In Ref. 6; AAB68026/AAD10378." evidence="5" ref="6">
    <original>P</original>
    <variation>T</variation>
    <location>
        <position position="189"/>
    </location>
</feature>
<feature type="strand" evidence="6">
    <location>
        <begin position="127"/>
        <end position="131"/>
    </location>
</feature>
<feature type="strand" evidence="6">
    <location>
        <begin position="140"/>
        <end position="143"/>
    </location>
</feature>
<feature type="strand" evidence="6">
    <location>
        <begin position="172"/>
        <end position="179"/>
    </location>
</feature>
<feature type="turn" evidence="6">
    <location>
        <begin position="203"/>
        <end position="205"/>
    </location>
</feature>
<accession>Q0JR25</accession>
<accession>A0A0P0UXL8</accession>
<accession>C7IWR7</accession>
<accession>P07084</accession>
<accession>P93432</accession>
<accession>Q5ZCA7</accession>
<accession>Q7XZC9</accession>
<accession>Q9AWV9</accession>
<accession>Q9M3W2</accession>
<accession>Q9SAS2</accession>
<keyword id="KW-0002">3D-structure</keyword>
<keyword id="KW-0903">Direct protein sequencing</keyword>
<keyword id="KW-1015">Disulfide bond</keyword>
<keyword id="KW-0646">Protease inhibitor</keyword>
<keyword id="KW-1185">Reference proteome</keyword>
<keyword id="KW-0677">Repeat</keyword>
<keyword id="KW-0722">Serine protease inhibitor</keyword>
<keyword id="KW-0732">Signal</keyword>